<proteinExistence type="inferred from homology"/>
<name>MTAP_LEPIC</name>
<gene>
    <name evidence="1" type="primary">mtnP</name>
    <name type="ordered locus">LIC_13399</name>
</gene>
<evidence type="ECO:0000255" key="1">
    <source>
        <dbReference type="HAMAP-Rule" id="MF_01963"/>
    </source>
</evidence>
<accession>Q72LZ4</accession>
<reference key="1">
    <citation type="journal article" date="2004" name="J. Bacteriol.">
        <title>Comparative genomics of two Leptospira interrogans serovars reveals novel insights into physiology and pathogenesis.</title>
        <authorList>
            <person name="Nascimento A.L.T.O."/>
            <person name="Ko A.I."/>
            <person name="Martins E.A.L."/>
            <person name="Monteiro-Vitorello C.B."/>
            <person name="Ho P.L."/>
            <person name="Haake D.A."/>
            <person name="Verjovski-Almeida S."/>
            <person name="Hartskeerl R.A."/>
            <person name="Marques M.V."/>
            <person name="Oliveira M.C."/>
            <person name="Menck C.F.M."/>
            <person name="Leite L.C.C."/>
            <person name="Carrer H."/>
            <person name="Coutinho L.L."/>
            <person name="Degrave W.M."/>
            <person name="Dellagostin O.A."/>
            <person name="El-Dorry H."/>
            <person name="Ferro E.S."/>
            <person name="Ferro M.I.T."/>
            <person name="Furlan L.R."/>
            <person name="Gamberini M."/>
            <person name="Giglioti E.A."/>
            <person name="Goes-Neto A."/>
            <person name="Goldman G.H."/>
            <person name="Goldman M.H.S."/>
            <person name="Harakava R."/>
            <person name="Jeronimo S.M.B."/>
            <person name="Junqueira-de-Azevedo I.L.M."/>
            <person name="Kimura E.T."/>
            <person name="Kuramae E.E."/>
            <person name="Lemos E.G.M."/>
            <person name="Lemos M.V.F."/>
            <person name="Marino C.L."/>
            <person name="Nunes L.R."/>
            <person name="de Oliveira R.C."/>
            <person name="Pereira G.G."/>
            <person name="Reis M.S."/>
            <person name="Schriefer A."/>
            <person name="Siqueira W.J."/>
            <person name="Sommer P."/>
            <person name="Tsai S.M."/>
            <person name="Simpson A.J.G."/>
            <person name="Ferro J.A."/>
            <person name="Camargo L.E.A."/>
            <person name="Kitajima J.P."/>
            <person name="Setubal J.C."/>
            <person name="Van Sluys M.A."/>
        </authorList>
    </citation>
    <scope>NUCLEOTIDE SEQUENCE [LARGE SCALE GENOMIC DNA]</scope>
    <source>
        <strain>Fiocruz L1-130</strain>
    </source>
</reference>
<organism>
    <name type="scientific">Leptospira interrogans serogroup Icterohaemorrhagiae serovar copenhageni (strain Fiocruz L1-130)</name>
    <dbReference type="NCBI Taxonomy" id="267671"/>
    <lineage>
        <taxon>Bacteria</taxon>
        <taxon>Pseudomonadati</taxon>
        <taxon>Spirochaetota</taxon>
        <taxon>Spirochaetia</taxon>
        <taxon>Leptospirales</taxon>
        <taxon>Leptospiraceae</taxon>
        <taxon>Leptospira</taxon>
    </lineage>
</organism>
<protein>
    <recommendedName>
        <fullName evidence="1">S-methyl-5'-thioadenosine phosphorylase</fullName>
        <ecNumber evidence="1">2.4.2.28</ecNumber>
    </recommendedName>
    <alternativeName>
        <fullName evidence="1">5'-methylthioadenosine phosphorylase</fullName>
        <shortName evidence="1">MTA phosphorylase</shortName>
        <shortName evidence="1">MTAP</shortName>
    </alternativeName>
</protein>
<keyword id="KW-0328">Glycosyltransferase</keyword>
<keyword id="KW-0660">Purine salvage</keyword>
<keyword id="KW-0808">Transferase</keyword>
<sequence>MSYNVRVAIIGGTGLYSLEGMELIEEIFPDTPWGKPSDKIKIGKYKGKLIAFLPRHGIGHFLSPPEVPNHANICALKQLGVEEIVAFSSVGSLREEIKPLDFVLPSQIIDRTRFRNSTYFGNGVVAHAPFAEPFSPNLSKRIAQTAKKIGLEIHLDKTLVCMEGPLFSTKAESHLYRSWGADIINMTVLPEAKLAREAEIAYQMICMSTDYDCWREGEESVTVEMVIANLTKNAETAKKLLSELIHVLGNGDDLSLKNSTRYSIITAPEKRNPETVKKLRVLFPEYF</sequence>
<comment type="function">
    <text evidence="1">Catalyzes the reversible phosphorylation of S-methyl-5'-thioadenosine (MTA) to adenine and 5-methylthioribose-1-phosphate. Involved in the breakdown of MTA, a major by-product of polyamine biosynthesis. Responsible for the first step in the methionine salvage pathway after MTA has been generated from S-adenosylmethionine. Has broad substrate specificity with 6-aminopurine nucleosides as preferred substrates.</text>
</comment>
<comment type="catalytic activity">
    <reaction evidence="1">
        <text>S-methyl-5'-thioadenosine + phosphate = 5-(methylsulfanyl)-alpha-D-ribose 1-phosphate + adenine</text>
        <dbReference type="Rhea" id="RHEA:11852"/>
        <dbReference type="ChEBI" id="CHEBI:16708"/>
        <dbReference type="ChEBI" id="CHEBI:17509"/>
        <dbReference type="ChEBI" id="CHEBI:43474"/>
        <dbReference type="ChEBI" id="CHEBI:58533"/>
        <dbReference type="EC" id="2.4.2.28"/>
    </reaction>
</comment>
<comment type="pathway">
    <text evidence="1">Amino-acid biosynthesis; L-methionine biosynthesis via salvage pathway; S-methyl-5-thio-alpha-D-ribose 1-phosphate from S-methyl-5'-thioadenosine (phosphorylase route): step 1/1.</text>
</comment>
<comment type="subunit">
    <text evidence="1">Homohexamer. Dimer of a homotrimer.</text>
</comment>
<comment type="similarity">
    <text evidence="1">Belongs to the PNP/MTAP phosphorylase family. MTAP subfamily.</text>
</comment>
<feature type="chain" id="PRO_0000184549" description="S-methyl-5'-thioadenosine phosphorylase">
    <location>
        <begin position="1"/>
        <end position="287"/>
    </location>
</feature>
<feature type="binding site" evidence="1">
    <location>
        <position position="13"/>
    </location>
    <ligand>
        <name>phosphate</name>
        <dbReference type="ChEBI" id="CHEBI:43474"/>
    </ligand>
</feature>
<feature type="binding site" evidence="1">
    <location>
        <begin position="55"/>
        <end position="56"/>
    </location>
    <ligand>
        <name>phosphate</name>
        <dbReference type="ChEBI" id="CHEBI:43474"/>
    </ligand>
</feature>
<feature type="binding site" evidence="1">
    <location>
        <position position="186"/>
    </location>
    <ligand>
        <name>substrate</name>
    </ligand>
</feature>
<feature type="binding site" evidence="1">
    <location>
        <position position="187"/>
    </location>
    <ligand>
        <name>phosphate</name>
        <dbReference type="ChEBI" id="CHEBI:43474"/>
    </ligand>
</feature>
<feature type="binding site" evidence="1">
    <location>
        <begin position="210"/>
        <end position="212"/>
    </location>
    <ligand>
        <name>substrate</name>
    </ligand>
</feature>
<feature type="site" description="Important for substrate specificity" evidence="1">
    <location>
        <position position="168"/>
    </location>
</feature>
<feature type="site" description="Important for substrate specificity" evidence="1">
    <location>
        <position position="223"/>
    </location>
</feature>
<dbReference type="EC" id="2.4.2.28" evidence="1"/>
<dbReference type="EMBL" id="AE016823">
    <property type="protein sequence ID" value="AAS71939.1"/>
    <property type="molecule type" value="Genomic_DNA"/>
</dbReference>
<dbReference type="RefSeq" id="WP_000121286.1">
    <property type="nucleotide sequence ID" value="NC_005823.1"/>
</dbReference>
<dbReference type="SMR" id="Q72LZ4"/>
<dbReference type="GeneID" id="61143264"/>
<dbReference type="KEGG" id="lic:LIC_13399"/>
<dbReference type="HOGENOM" id="CLU_054456_0_1_12"/>
<dbReference type="UniPathway" id="UPA00904">
    <property type="reaction ID" value="UER00873"/>
</dbReference>
<dbReference type="Proteomes" id="UP000007037">
    <property type="component" value="Chromosome I"/>
</dbReference>
<dbReference type="GO" id="GO:0005829">
    <property type="term" value="C:cytosol"/>
    <property type="evidence" value="ECO:0007669"/>
    <property type="project" value="TreeGrafter"/>
</dbReference>
<dbReference type="GO" id="GO:0017061">
    <property type="term" value="F:S-methyl-5-thioadenosine phosphorylase activity"/>
    <property type="evidence" value="ECO:0007669"/>
    <property type="project" value="UniProtKB-UniRule"/>
</dbReference>
<dbReference type="GO" id="GO:0019509">
    <property type="term" value="P:L-methionine salvage from methylthioadenosine"/>
    <property type="evidence" value="ECO:0007669"/>
    <property type="project" value="UniProtKB-UniRule"/>
</dbReference>
<dbReference type="GO" id="GO:0006166">
    <property type="term" value="P:purine ribonucleoside salvage"/>
    <property type="evidence" value="ECO:0007669"/>
    <property type="project" value="UniProtKB-KW"/>
</dbReference>
<dbReference type="CDD" id="cd09010">
    <property type="entry name" value="MTAP_SsMTAPII_like_MTIP"/>
    <property type="match status" value="1"/>
</dbReference>
<dbReference type="FunFam" id="3.40.50.1580:FF:000008">
    <property type="entry name" value="S-methyl-5'-thioadenosine phosphorylase"/>
    <property type="match status" value="1"/>
</dbReference>
<dbReference type="Gene3D" id="3.40.50.1580">
    <property type="entry name" value="Nucleoside phosphorylase domain"/>
    <property type="match status" value="1"/>
</dbReference>
<dbReference type="HAMAP" id="MF_01963">
    <property type="entry name" value="MTAP"/>
    <property type="match status" value="1"/>
</dbReference>
<dbReference type="InterPro" id="IPR010044">
    <property type="entry name" value="MTAP"/>
</dbReference>
<dbReference type="InterPro" id="IPR000845">
    <property type="entry name" value="Nucleoside_phosphorylase_d"/>
</dbReference>
<dbReference type="InterPro" id="IPR035994">
    <property type="entry name" value="Nucleoside_phosphorylase_sf"/>
</dbReference>
<dbReference type="InterPro" id="IPR018099">
    <property type="entry name" value="Purine_phosphorylase-2_CS"/>
</dbReference>
<dbReference type="NCBIfam" id="TIGR01694">
    <property type="entry name" value="MTAP"/>
    <property type="match status" value="1"/>
</dbReference>
<dbReference type="PANTHER" id="PTHR42679">
    <property type="entry name" value="S-METHYL-5'-THIOADENOSINE PHOSPHORYLASE"/>
    <property type="match status" value="1"/>
</dbReference>
<dbReference type="PANTHER" id="PTHR42679:SF2">
    <property type="entry name" value="S-METHYL-5'-THIOADENOSINE PHOSPHORYLASE"/>
    <property type="match status" value="1"/>
</dbReference>
<dbReference type="Pfam" id="PF01048">
    <property type="entry name" value="PNP_UDP_1"/>
    <property type="match status" value="1"/>
</dbReference>
<dbReference type="SUPFAM" id="SSF53167">
    <property type="entry name" value="Purine and uridine phosphorylases"/>
    <property type="match status" value="1"/>
</dbReference>
<dbReference type="PROSITE" id="PS01240">
    <property type="entry name" value="PNP_MTAP_2"/>
    <property type="match status" value="1"/>
</dbReference>